<accession>Q8NR49</accession>
<organism>
    <name type="scientific">Corynebacterium glutamicum (strain ATCC 13032 / DSM 20300 / JCM 1318 / BCRC 11384 / CCUG 27702 / LMG 3730 / NBRC 12168 / NCIMB 10025 / NRRL B-2784 / 534)</name>
    <dbReference type="NCBI Taxonomy" id="196627"/>
    <lineage>
        <taxon>Bacteria</taxon>
        <taxon>Bacillati</taxon>
        <taxon>Actinomycetota</taxon>
        <taxon>Actinomycetes</taxon>
        <taxon>Mycobacteriales</taxon>
        <taxon>Corynebacteriaceae</taxon>
        <taxon>Corynebacterium</taxon>
    </lineage>
</organism>
<dbReference type="EC" id="3.1.-.-" evidence="1"/>
<dbReference type="EMBL" id="BA000036">
    <property type="protein sequence ID" value="BAB98608.1"/>
    <property type="molecule type" value="Genomic_DNA"/>
</dbReference>
<dbReference type="EMBL" id="BX927151">
    <property type="protein sequence ID" value="CAF19919.1"/>
    <property type="molecule type" value="Genomic_DNA"/>
</dbReference>
<dbReference type="RefSeq" id="NP_600440.1">
    <property type="nucleotide sequence ID" value="NC_003450.3"/>
</dbReference>
<dbReference type="RefSeq" id="WP_011014205.1">
    <property type="nucleotide sequence ID" value="NC_006958.1"/>
</dbReference>
<dbReference type="SMR" id="Q8NR49"/>
<dbReference type="STRING" id="196627.cg1371"/>
<dbReference type="GeneID" id="1019198"/>
<dbReference type="KEGG" id="cgb:cg1371"/>
<dbReference type="KEGG" id="cgl:Cgl1215"/>
<dbReference type="PATRIC" id="fig|196627.13.peg.1194"/>
<dbReference type="eggNOG" id="COG1637">
    <property type="taxonomic scope" value="Bacteria"/>
</dbReference>
<dbReference type="HOGENOM" id="CLU_069350_0_0_11"/>
<dbReference type="OrthoDB" id="3344925at2"/>
<dbReference type="BioCyc" id="CORYNE:G18NG-10788-MONOMER"/>
<dbReference type="Proteomes" id="UP000000582">
    <property type="component" value="Chromosome"/>
</dbReference>
<dbReference type="Proteomes" id="UP000001009">
    <property type="component" value="Chromosome"/>
</dbReference>
<dbReference type="GO" id="GO:0005737">
    <property type="term" value="C:cytoplasm"/>
    <property type="evidence" value="ECO:0007669"/>
    <property type="project" value="UniProtKB-SubCell"/>
</dbReference>
<dbReference type="GO" id="GO:0003677">
    <property type="term" value="F:DNA binding"/>
    <property type="evidence" value="ECO:0007669"/>
    <property type="project" value="UniProtKB-KW"/>
</dbReference>
<dbReference type="GO" id="GO:0000014">
    <property type="term" value="F:single-stranded DNA endodeoxyribonuclease activity"/>
    <property type="evidence" value="ECO:0007669"/>
    <property type="project" value="UniProtKB-UniRule"/>
</dbReference>
<dbReference type="CDD" id="cd22341">
    <property type="entry name" value="NucS-like"/>
    <property type="match status" value="1"/>
</dbReference>
<dbReference type="Gene3D" id="2.70.180.20">
    <property type="match status" value="1"/>
</dbReference>
<dbReference type="Gene3D" id="3.40.1350.10">
    <property type="match status" value="1"/>
</dbReference>
<dbReference type="HAMAP" id="MF_00722">
    <property type="entry name" value="NucS"/>
    <property type="match status" value="1"/>
</dbReference>
<dbReference type="InterPro" id="IPR002793">
    <property type="entry name" value="Endonuclease_NucS"/>
</dbReference>
<dbReference type="InterPro" id="IPR048301">
    <property type="entry name" value="NucS_C"/>
</dbReference>
<dbReference type="InterPro" id="IPR048302">
    <property type="entry name" value="NucS_N"/>
</dbReference>
<dbReference type="InterPro" id="IPR049173">
    <property type="entry name" value="NucS_N_sf"/>
</dbReference>
<dbReference type="InterPro" id="IPR011335">
    <property type="entry name" value="Restrct_endonuc-II-like"/>
</dbReference>
<dbReference type="InterPro" id="IPR011856">
    <property type="entry name" value="tRNA_endonuc-like_dom_sf"/>
</dbReference>
<dbReference type="NCBIfam" id="NF002876">
    <property type="entry name" value="PRK03298.1"/>
    <property type="match status" value="1"/>
</dbReference>
<dbReference type="PANTHER" id="PTHR38814">
    <property type="entry name" value="ENDONUCLEASE NUCS"/>
    <property type="match status" value="1"/>
</dbReference>
<dbReference type="PANTHER" id="PTHR38814:SF1">
    <property type="entry name" value="ENDONUCLEASE NUCS"/>
    <property type="match status" value="1"/>
</dbReference>
<dbReference type="Pfam" id="PF01939">
    <property type="entry name" value="NucS_C"/>
    <property type="match status" value="1"/>
</dbReference>
<dbReference type="Pfam" id="PF21003">
    <property type="entry name" value="NucS_N"/>
    <property type="match status" value="1"/>
</dbReference>
<dbReference type="SUPFAM" id="SSF52980">
    <property type="entry name" value="Restriction endonuclease-like"/>
    <property type="match status" value="1"/>
</dbReference>
<keyword id="KW-0963">Cytoplasm</keyword>
<keyword id="KW-0238">DNA-binding</keyword>
<keyword id="KW-0255">Endonuclease</keyword>
<keyword id="KW-0378">Hydrolase</keyword>
<keyword id="KW-0540">Nuclease</keyword>
<keyword id="KW-1185">Reference proteome</keyword>
<reference key="1">
    <citation type="journal article" date="2003" name="Appl. Microbiol. Biotechnol.">
        <title>The Corynebacterium glutamicum genome: features and impacts on biotechnological processes.</title>
        <authorList>
            <person name="Ikeda M."/>
            <person name="Nakagawa S."/>
        </authorList>
    </citation>
    <scope>NUCLEOTIDE SEQUENCE [LARGE SCALE GENOMIC DNA]</scope>
    <source>
        <strain>ATCC 13032 / DSM 20300 / JCM 1318 / BCRC 11384 / CCUG 27702 / LMG 3730 / NBRC 12168 / NCIMB 10025 / NRRL B-2784 / 534</strain>
    </source>
</reference>
<reference key="2">
    <citation type="journal article" date="2003" name="J. Biotechnol.">
        <title>The complete Corynebacterium glutamicum ATCC 13032 genome sequence and its impact on the production of L-aspartate-derived amino acids and vitamins.</title>
        <authorList>
            <person name="Kalinowski J."/>
            <person name="Bathe B."/>
            <person name="Bartels D."/>
            <person name="Bischoff N."/>
            <person name="Bott M."/>
            <person name="Burkovski A."/>
            <person name="Dusch N."/>
            <person name="Eggeling L."/>
            <person name="Eikmanns B.J."/>
            <person name="Gaigalat L."/>
            <person name="Goesmann A."/>
            <person name="Hartmann M."/>
            <person name="Huthmacher K."/>
            <person name="Kraemer R."/>
            <person name="Linke B."/>
            <person name="McHardy A.C."/>
            <person name="Meyer F."/>
            <person name="Moeckel B."/>
            <person name="Pfefferle W."/>
            <person name="Puehler A."/>
            <person name="Rey D.A."/>
            <person name="Rueckert C."/>
            <person name="Rupp O."/>
            <person name="Sahm H."/>
            <person name="Wendisch V.F."/>
            <person name="Wiegraebe I."/>
            <person name="Tauch A."/>
        </authorList>
    </citation>
    <scope>NUCLEOTIDE SEQUENCE [LARGE SCALE GENOMIC DNA]</scope>
    <source>
        <strain>ATCC 13032 / DSM 20300 / JCM 1318 / BCRC 11384 / CCUG 27702 / LMG 3730 / NBRC 12168 / NCIMB 10025 / NRRL B-2784 / 534</strain>
    </source>
</reference>
<proteinExistence type="inferred from homology"/>
<comment type="function">
    <text evidence="1">Cleaves both 3' and 5' ssDNA extremities of branched DNA structures.</text>
</comment>
<comment type="subcellular location">
    <subcellularLocation>
        <location evidence="1">Cytoplasm</location>
    </subcellularLocation>
</comment>
<comment type="similarity">
    <text evidence="1">Belongs to the NucS endonuclease family.</text>
</comment>
<evidence type="ECO:0000255" key="1">
    <source>
        <dbReference type="HAMAP-Rule" id="MF_00722"/>
    </source>
</evidence>
<name>NUCS_CORGL</name>
<protein>
    <recommendedName>
        <fullName evidence="1">Endonuclease NucS</fullName>
        <ecNumber evidence="1">3.1.-.-</ecNumber>
    </recommendedName>
</protein>
<sequence>MRLVIARCSVDYVGRLEAHLPSADRLLMVKADGSVSIHADDRAYKPLNWMTPPCSLVETPITDEDGEATGESLWVVENKKGEQLRITVEEIHSEQNFDLGQDPGLVKDGVEDHLQELLAEHITTLGDGYTLIRREYPTAIGPVDILCRNSDGETVAVEIKRRGGIDGVEQLTRYLELLNRDELLKPVHGVFAAQEIKPQAKTLAEDRGIKCVTLDYQALRGIESNELTLF</sequence>
<gene>
    <name evidence="1" type="primary">nucS</name>
    <name type="ordered locus">Cgl1215</name>
    <name type="ordered locus">cg1371</name>
</gene>
<feature type="chain" id="PRO_0000155682" description="Endonuclease NucS">
    <location>
        <begin position="1"/>
        <end position="230"/>
    </location>
</feature>